<gene>
    <name evidence="1" type="primary">kdsA</name>
    <name type="ordered locus">XCV1750</name>
</gene>
<dbReference type="EC" id="2.5.1.55" evidence="1"/>
<dbReference type="EMBL" id="AM039952">
    <property type="protein sequence ID" value="CAJ23427.1"/>
    <property type="molecule type" value="Genomic_DNA"/>
</dbReference>
<dbReference type="RefSeq" id="WP_011347098.1">
    <property type="nucleotide sequence ID" value="NZ_CP017190.1"/>
</dbReference>
<dbReference type="SMR" id="Q3BUT2"/>
<dbReference type="STRING" id="456327.BJD11_13795"/>
<dbReference type="GeneID" id="97510092"/>
<dbReference type="KEGG" id="xcv:XCV1750"/>
<dbReference type="eggNOG" id="COG2877">
    <property type="taxonomic scope" value="Bacteria"/>
</dbReference>
<dbReference type="HOGENOM" id="CLU_036666_0_0_6"/>
<dbReference type="UniPathway" id="UPA00030"/>
<dbReference type="UniPathway" id="UPA00357">
    <property type="reaction ID" value="UER00474"/>
</dbReference>
<dbReference type="Proteomes" id="UP000007069">
    <property type="component" value="Chromosome"/>
</dbReference>
<dbReference type="GO" id="GO:0005737">
    <property type="term" value="C:cytoplasm"/>
    <property type="evidence" value="ECO:0007669"/>
    <property type="project" value="UniProtKB-SubCell"/>
</dbReference>
<dbReference type="GO" id="GO:0008676">
    <property type="term" value="F:3-deoxy-8-phosphooctulonate synthase activity"/>
    <property type="evidence" value="ECO:0007669"/>
    <property type="project" value="UniProtKB-UniRule"/>
</dbReference>
<dbReference type="GO" id="GO:0019294">
    <property type="term" value="P:keto-3-deoxy-D-manno-octulosonic acid biosynthetic process"/>
    <property type="evidence" value="ECO:0007669"/>
    <property type="project" value="UniProtKB-UniRule"/>
</dbReference>
<dbReference type="Gene3D" id="3.20.20.70">
    <property type="entry name" value="Aldolase class I"/>
    <property type="match status" value="1"/>
</dbReference>
<dbReference type="HAMAP" id="MF_00056">
    <property type="entry name" value="KDO8P_synth"/>
    <property type="match status" value="1"/>
</dbReference>
<dbReference type="InterPro" id="IPR013785">
    <property type="entry name" value="Aldolase_TIM"/>
</dbReference>
<dbReference type="InterPro" id="IPR006218">
    <property type="entry name" value="DAHP1/KDSA"/>
</dbReference>
<dbReference type="InterPro" id="IPR006269">
    <property type="entry name" value="KDO8P_synthase"/>
</dbReference>
<dbReference type="NCBIfam" id="TIGR01362">
    <property type="entry name" value="KDO8P_synth"/>
    <property type="match status" value="1"/>
</dbReference>
<dbReference type="NCBIfam" id="NF003543">
    <property type="entry name" value="PRK05198.1"/>
    <property type="match status" value="1"/>
</dbReference>
<dbReference type="PANTHER" id="PTHR21057">
    <property type="entry name" value="PHOSPHO-2-DEHYDRO-3-DEOXYHEPTONATE ALDOLASE"/>
    <property type="match status" value="1"/>
</dbReference>
<dbReference type="Pfam" id="PF00793">
    <property type="entry name" value="DAHP_synth_1"/>
    <property type="match status" value="1"/>
</dbReference>
<dbReference type="SUPFAM" id="SSF51569">
    <property type="entry name" value="Aldolase"/>
    <property type="match status" value="1"/>
</dbReference>
<evidence type="ECO:0000255" key="1">
    <source>
        <dbReference type="HAMAP-Rule" id="MF_00056"/>
    </source>
</evidence>
<feature type="chain" id="PRO_0000304503" description="2-dehydro-3-deoxyphosphooctonate aldolase">
    <location>
        <begin position="1"/>
        <end position="276"/>
    </location>
</feature>
<organism>
    <name type="scientific">Xanthomonas euvesicatoria pv. vesicatoria (strain 85-10)</name>
    <name type="common">Xanthomonas campestris pv. vesicatoria</name>
    <dbReference type="NCBI Taxonomy" id="316273"/>
    <lineage>
        <taxon>Bacteria</taxon>
        <taxon>Pseudomonadati</taxon>
        <taxon>Pseudomonadota</taxon>
        <taxon>Gammaproteobacteria</taxon>
        <taxon>Lysobacterales</taxon>
        <taxon>Lysobacteraceae</taxon>
        <taxon>Xanthomonas</taxon>
    </lineage>
</organism>
<accession>Q3BUT2</accession>
<reference key="1">
    <citation type="journal article" date="2005" name="J. Bacteriol.">
        <title>Insights into genome plasticity and pathogenicity of the plant pathogenic Bacterium Xanthomonas campestris pv. vesicatoria revealed by the complete genome sequence.</title>
        <authorList>
            <person name="Thieme F."/>
            <person name="Koebnik R."/>
            <person name="Bekel T."/>
            <person name="Berger C."/>
            <person name="Boch J."/>
            <person name="Buettner D."/>
            <person name="Caldana C."/>
            <person name="Gaigalat L."/>
            <person name="Goesmann A."/>
            <person name="Kay S."/>
            <person name="Kirchner O."/>
            <person name="Lanz C."/>
            <person name="Linke B."/>
            <person name="McHardy A.C."/>
            <person name="Meyer F."/>
            <person name="Mittenhuber G."/>
            <person name="Nies D.H."/>
            <person name="Niesbach-Kloesgen U."/>
            <person name="Patschkowski T."/>
            <person name="Rueckert C."/>
            <person name="Rupp O."/>
            <person name="Schneiker S."/>
            <person name="Schuster S.C."/>
            <person name="Vorhoelter F.J."/>
            <person name="Weber E."/>
            <person name="Puehler A."/>
            <person name="Bonas U."/>
            <person name="Bartels D."/>
            <person name="Kaiser O."/>
        </authorList>
    </citation>
    <scope>NUCLEOTIDE SEQUENCE [LARGE SCALE GENOMIC DNA]</scope>
    <source>
        <strain>85-10</strain>
    </source>
</reference>
<sequence>MKLCDFEVGLDQPLFLIAGPCVIESMQLQLDVAGRLKEITGKLGVNFIFKSSFDKANRTSGTSFRGPGLEEGLKVLDAVKKQIGVPVLTDVHEYTPMNEVAAVVDVLQTPAFLVRQTDFIKNVCAAGKPVNIKKGQFLAPWDMKPVVDKAKSTGNEQIMVCERGASFGYNNLVSDMRSLSVMRDTGCPVVFDATHSVQLPGGQGSSSGGQREFVPVLARAAVAVGISGLFAETHPDPSKALSDGPNAWPLDRMEELLETLMELDAVTKKHGFARFA</sequence>
<proteinExistence type="inferred from homology"/>
<protein>
    <recommendedName>
        <fullName evidence="1">2-dehydro-3-deoxyphosphooctonate aldolase</fullName>
        <ecNumber evidence="1">2.5.1.55</ecNumber>
    </recommendedName>
    <alternativeName>
        <fullName evidence="1">3-deoxy-D-manno-octulosonic acid 8-phosphate synthase</fullName>
    </alternativeName>
    <alternativeName>
        <fullName evidence="1">KDO-8-phosphate synthase</fullName>
        <shortName evidence="1">KDO 8-P synthase</shortName>
        <shortName evidence="1">KDOPS</shortName>
    </alternativeName>
    <alternativeName>
        <fullName evidence="1">Phospho-2-dehydro-3-deoxyoctonate aldolase</fullName>
    </alternativeName>
</protein>
<keyword id="KW-0963">Cytoplasm</keyword>
<keyword id="KW-0448">Lipopolysaccharide biosynthesis</keyword>
<keyword id="KW-0808">Transferase</keyword>
<name>KDSA_XANE5</name>
<comment type="catalytic activity">
    <reaction evidence="1">
        <text>D-arabinose 5-phosphate + phosphoenolpyruvate + H2O = 3-deoxy-alpha-D-manno-2-octulosonate-8-phosphate + phosphate</text>
        <dbReference type="Rhea" id="RHEA:14053"/>
        <dbReference type="ChEBI" id="CHEBI:15377"/>
        <dbReference type="ChEBI" id="CHEBI:43474"/>
        <dbReference type="ChEBI" id="CHEBI:57693"/>
        <dbReference type="ChEBI" id="CHEBI:58702"/>
        <dbReference type="ChEBI" id="CHEBI:85985"/>
        <dbReference type="EC" id="2.5.1.55"/>
    </reaction>
</comment>
<comment type="pathway">
    <text evidence="1">Carbohydrate biosynthesis; 3-deoxy-D-manno-octulosonate biosynthesis; 3-deoxy-D-manno-octulosonate from D-ribulose 5-phosphate: step 2/3.</text>
</comment>
<comment type="pathway">
    <text evidence="1">Bacterial outer membrane biogenesis; lipopolysaccharide biosynthesis.</text>
</comment>
<comment type="subcellular location">
    <subcellularLocation>
        <location evidence="1">Cytoplasm</location>
    </subcellularLocation>
</comment>
<comment type="similarity">
    <text evidence="1">Belongs to the KdsA family.</text>
</comment>